<accession>B9WM88</accession>
<protein>
    <recommendedName>
        <fullName>U3 small nucleolar RNA-associated protein 25</fullName>
        <shortName>U3 snoRNA-associated protein 25</shortName>
    </recommendedName>
    <alternativeName>
        <fullName>U three protein 25</fullName>
    </alternativeName>
</protein>
<sequence length="712" mass="82588">MAKQFKRKSNGVSENNRKRGRQELRKVTRTAARKQQDESHEDGLDVNNNFEEDNAEEEIDEEEVGEQDYDDRGKAYSALLTLLKSEHKEKSKNVTSGSLQVDRTNPSDSEDEEIAGANVEEDENEGEDENVDENGIDSESDNEDEDTVNRLSTDPFESHFNLPTEDYLAKEEKLVLKDNEKWCTVDKRTYSDLAVTSLVQLPPGEPINPPLLKSSKLNEYTIKKRVLDSYQQAYGAELTDLESTLINPILNYRDVNFQYKSFKNKSYRKLYTLHALNHIFKTRDRILKNTAKLHAAKEDSEELELRDQGFTRSKVLIMLPTRDSCYEVVEQLIKLSGTEQQENKKKFNDQFYVKAAPPANKPDDFRDAFKGNNSDFFCIGLKFTRKSLKLYSSFYSSDIILASPIGLSMILENPDKKKRQYDFLSSIEVLIVDRCNQIEMQNWDHVNTVMKYVNKVPKEFHDADFSRIRMWSINDQAKLLRQTLVFCEYLTPSINNLISSKSHNLSGKVKFKPIINSENSMMNSIGLKIKQIFQRFDSQSPLQDPDARYKYFINAILPSLLKTSSYEDGIMIFIPSYFDYLRVKNYLKTSTKFTFGSIDEYSSQSKLTKTRQEFASGKIKLLLYTERLHYFRRYEISGVKTLIMYGLPSNPLFYKELIRFIGKSVFKEECDLDLALVKILFSKWDAVNLEKMVGNERAPVLCNSMNELYEFR</sequence>
<dbReference type="EMBL" id="FM992695">
    <property type="protein sequence ID" value="CAX40201.1"/>
    <property type="molecule type" value="Genomic_DNA"/>
</dbReference>
<dbReference type="RefSeq" id="XP_002422197.1">
    <property type="nucleotide sequence ID" value="XM_002422152.1"/>
</dbReference>
<dbReference type="GeneID" id="8049346"/>
<dbReference type="KEGG" id="cdu:CD36_32380"/>
<dbReference type="CGD" id="CAL0000162760">
    <property type="gene designation" value="Cd36_32380"/>
</dbReference>
<dbReference type="VEuPathDB" id="FungiDB:CD36_32380"/>
<dbReference type="eggNOG" id="KOG2340">
    <property type="taxonomic scope" value="Eukaryota"/>
</dbReference>
<dbReference type="HOGENOM" id="CLU_018705_0_1_1"/>
<dbReference type="OrthoDB" id="10264378at2759"/>
<dbReference type="Proteomes" id="UP000002605">
    <property type="component" value="Chromosome R"/>
</dbReference>
<dbReference type="GO" id="GO:0005730">
    <property type="term" value="C:nucleolus"/>
    <property type="evidence" value="ECO:0007669"/>
    <property type="project" value="UniProtKB-SubCell"/>
</dbReference>
<dbReference type="GO" id="GO:0032040">
    <property type="term" value="C:small-subunit processome"/>
    <property type="evidence" value="ECO:0007669"/>
    <property type="project" value="TreeGrafter"/>
</dbReference>
<dbReference type="GO" id="GO:0019843">
    <property type="term" value="F:rRNA binding"/>
    <property type="evidence" value="ECO:0007669"/>
    <property type="project" value="TreeGrafter"/>
</dbReference>
<dbReference type="GO" id="GO:0034511">
    <property type="term" value="F:U3 snoRNA binding"/>
    <property type="evidence" value="ECO:0007669"/>
    <property type="project" value="InterPro"/>
</dbReference>
<dbReference type="GO" id="GO:0000462">
    <property type="term" value="P:maturation of SSU-rRNA from tricistronic rRNA transcript (SSU-rRNA, 5.8S rRNA, LSU-rRNA)"/>
    <property type="evidence" value="ECO:0007669"/>
    <property type="project" value="TreeGrafter"/>
</dbReference>
<dbReference type="Gene3D" id="3.40.50.300">
    <property type="entry name" value="P-loop containing nucleotide triphosphate hydrolases"/>
    <property type="match status" value="1"/>
</dbReference>
<dbReference type="InterPro" id="IPR027417">
    <property type="entry name" value="P-loop_NTPase"/>
</dbReference>
<dbReference type="InterPro" id="IPR010678">
    <property type="entry name" value="UTP25"/>
</dbReference>
<dbReference type="InterPro" id="IPR053939">
    <property type="entry name" value="UTP25_C"/>
</dbReference>
<dbReference type="InterPro" id="IPR053940">
    <property type="entry name" value="UTP25_NTPase-like"/>
</dbReference>
<dbReference type="PANTHER" id="PTHR12933">
    <property type="entry name" value="ORF PROTEIN-RELATED"/>
    <property type="match status" value="1"/>
</dbReference>
<dbReference type="PANTHER" id="PTHR12933:SF0">
    <property type="entry name" value="U3 SMALL NUCLEOLAR RNA-ASSOCIATED PROTEIN 25 HOMOLOG"/>
    <property type="match status" value="1"/>
</dbReference>
<dbReference type="Pfam" id="PF06862">
    <property type="entry name" value="Utp25_C"/>
    <property type="match status" value="1"/>
</dbReference>
<dbReference type="Pfam" id="PF22916">
    <property type="entry name" value="UTP25_NTPase-like"/>
    <property type="match status" value="1"/>
</dbReference>
<keyword id="KW-0539">Nucleus</keyword>
<keyword id="KW-0687">Ribonucleoprotein</keyword>
<keyword id="KW-0690">Ribosome biogenesis</keyword>
<keyword id="KW-0698">rRNA processing</keyword>
<reference key="1">
    <citation type="journal article" date="2009" name="Genome Res.">
        <title>Comparative genomics of the fungal pathogens Candida dubliniensis and Candida albicans.</title>
        <authorList>
            <person name="Jackson A.P."/>
            <person name="Gamble J.A."/>
            <person name="Yeomans T."/>
            <person name="Moran G.P."/>
            <person name="Saunders D."/>
            <person name="Harris D."/>
            <person name="Aslett M."/>
            <person name="Barrell J.F."/>
            <person name="Butler G."/>
            <person name="Citiulo F."/>
            <person name="Coleman D.C."/>
            <person name="de Groot P.W.J."/>
            <person name="Goodwin T.J."/>
            <person name="Quail M.A."/>
            <person name="McQuillan J."/>
            <person name="Munro C.A."/>
            <person name="Pain A."/>
            <person name="Poulter R.T."/>
            <person name="Rajandream M.A."/>
            <person name="Renauld H."/>
            <person name="Spiering M.J."/>
            <person name="Tivey A."/>
            <person name="Gow N.A.R."/>
            <person name="Barrell B."/>
            <person name="Sullivan D.J."/>
            <person name="Berriman M."/>
        </authorList>
    </citation>
    <scope>NUCLEOTIDE SEQUENCE [LARGE SCALE GENOMIC DNA]</scope>
    <source>
        <strain>CD36 / ATCC MYA-646 / CBS 7987 / NCPF 3949 / NRRL Y-17841</strain>
    </source>
</reference>
<evidence type="ECO:0000250" key="1"/>
<evidence type="ECO:0000256" key="2">
    <source>
        <dbReference type="SAM" id="MobiDB-lite"/>
    </source>
</evidence>
<evidence type="ECO:0000305" key="3"/>
<gene>
    <name type="primary">UTP25</name>
    <name type="ORF">CD36_32380</name>
</gene>
<comment type="function">
    <text evidence="1">DEAD-box RNA helicase-like protein required for pre-18S rRNA processing, specifically at sites A0, A1, and A2.</text>
</comment>
<comment type="subunit">
    <text evidence="1">Component of the ribosomal small subunit (SSU) processome composed of at least 40 protein subunits and snoRNA U3.</text>
</comment>
<comment type="subcellular location">
    <subcellularLocation>
        <location evidence="1">Nucleus</location>
        <location evidence="1">Nucleolus</location>
    </subcellularLocation>
</comment>
<comment type="similarity">
    <text evidence="3">Belongs to the UTP25 family.</text>
</comment>
<proteinExistence type="inferred from homology"/>
<feature type="chain" id="PRO_0000408109" description="U3 small nucleolar RNA-associated protein 25">
    <location>
        <begin position="1"/>
        <end position="712"/>
    </location>
</feature>
<feature type="region of interest" description="Disordered" evidence="2">
    <location>
        <begin position="1"/>
        <end position="72"/>
    </location>
</feature>
<feature type="region of interest" description="Disordered" evidence="2">
    <location>
        <begin position="85"/>
        <end position="159"/>
    </location>
</feature>
<feature type="compositionally biased region" description="Basic and acidic residues" evidence="2">
    <location>
        <begin position="15"/>
        <end position="26"/>
    </location>
</feature>
<feature type="compositionally biased region" description="Basic and acidic residues" evidence="2">
    <location>
        <begin position="34"/>
        <end position="43"/>
    </location>
</feature>
<feature type="compositionally biased region" description="Acidic residues" evidence="2">
    <location>
        <begin position="50"/>
        <end position="69"/>
    </location>
</feature>
<feature type="compositionally biased region" description="Polar residues" evidence="2">
    <location>
        <begin position="93"/>
        <end position="107"/>
    </location>
</feature>
<feature type="compositionally biased region" description="Acidic residues" evidence="2">
    <location>
        <begin position="108"/>
        <end position="146"/>
    </location>
</feature>
<name>UTP25_CANDC</name>
<organism>
    <name type="scientific">Candida dubliniensis (strain CD36 / ATCC MYA-646 / CBS 7987 / NCPF 3949 / NRRL Y-17841)</name>
    <name type="common">Yeast</name>
    <dbReference type="NCBI Taxonomy" id="573826"/>
    <lineage>
        <taxon>Eukaryota</taxon>
        <taxon>Fungi</taxon>
        <taxon>Dikarya</taxon>
        <taxon>Ascomycota</taxon>
        <taxon>Saccharomycotina</taxon>
        <taxon>Pichiomycetes</taxon>
        <taxon>Debaryomycetaceae</taxon>
        <taxon>Candida/Lodderomyces clade</taxon>
        <taxon>Candida</taxon>
    </lineage>
</organism>